<gene>
    <name type="ORF">ATEG_02133</name>
</gene>
<reference key="1">
    <citation type="submission" date="2005-09" db="EMBL/GenBank/DDBJ databases">
        <title>Annotation of the Aspergillus terreus NIH2624 genome.</title>
        <authorList>
            <person name="Birren B.W."/>
            <person name="Lander E.S."/>
            <person name="Galagan J.E."/>
            <person name="Nusbaum C."/>
            <person name="Devon K."/>
            <person name="Henn M."/>
            <person name="Ma L.-J."/>
            <person name="Jaffe D.B."/>
            <person name="Butler J."/>
            <person name="Alvarez P."/>
            <person name="Gnerre S."/>
            <person name="Grabherr M."/>
            <person name="Kleber M."/>
            <person name="Mauceli E.W."/>
            <person name="Brockman W."/>
            <person name="Rounsley S."/>
            <person name="Young S.K."/>
            <person name="LaButti K."/>
            <person name="Pushparaj V."/>
            <person name="DeCaprio D."/>
            <person name="Crawford M."/>
            <person name="Koehrsen M."/>
            <person name="Engels R."/>
            <person name="Montgomery P."/>
            <person name="Pearson M."/>
            <person name="Howarth C."/>
            <person name="Larson L."/>
            <person name="Luoma S."/>
            <person name="White J."/>
            <person name="Alvarado L."/>
            <person name="Kodira C.D."/>
            <person name="Zeng Q."/>
            <person name="Oleary S."/>
            <person name="Yandava C."/>
            <person name="Denning D.W."/>
            <person name="Nierman W.C."/>
            <person name="Milne T."/>
            <person name="Madden K."/>
        </authorList>
    </citation>
    <scope>NUCLEOTIDE SEQUENCE [LARGE SCALE GENOMIC DNA]</scope>
    <source>
        <strain>NIH 2624 / FGSC A1156</strain>
    </source>
</reference>
<keyword id="KW-1015">Disulfide bond</keyword>
<keyword id="KW-0325">Glycoprotein</keyword>
<keyword id="KW-0378">Hydrolase</keyword>
<keyword id="KW-1185">Reference proteome</keyword>
<keyword id="KW-0964">Secreted</keyword>
<keyword id="KW-0719">Serine esterase</keyword>
<keyword id="KW-0732">Signal</keyword>
<organism>
    <name type="scientific">Aspergillus terreus (strain NIH 2624 / FGSC A1156)</name>
    <dbReference type="NCBI Taxonomy" id="341663"/>
    <lineage>
        <taxon>Eukaryota</taxon>
        <taxon>Fungi</taxon>
        <taxon>Dikarya</taxon>
        <taxon>Ascomycota</taxon>
        <taxon>Pezizomycotina</taxon>
        <taxon>Eurotiomycetes</taxon>
        <taxon>Eurotiomycetidae</taxon>
        <taxon>Eurotiales</taxon>
        <taxon>Aspergillaceae</taxon>
        <taxon>Aspergillus</taxon>
        <taxon>Aspergillus subgen. Circumdati</taxon>
    </lineage>
</organism>
<accession>Q0CW01</accession>
<evidence type="ECO:0000250" key="1">
    <source>
        <dbReference type="UniProtKB" id="P00590"/>
    </source>
</evidence>
<evidence type="ECO:0000250" key="2">
    <source>
        <dbReference type="UniProtKB" id="P11373"/>
    </source>
</evidence>
<evidence type="ECO:0000250" key="3">
    <source>
        <dbReference type="UniProtKB" id="P52956"/>
    </source>
</evidence>
<evidence type="ECO:0000255" key="4"/>
<evidence type="ECO:0000255" key="5">
    <source>
        <dbReference type="PROSITE-ProRule" id="PRU10108"/>
    </source>
</evidence>
<evidence type="ECO:0000255" key="6">
    <source>
        <dbReference type="PROSITE-ProRule" id="PRU10109"/>
    </source>
</evidence>
<evidence type="ECO:0000305" key="7"/>
<comment type="function">
    <text evidence="1">Catalyzes the hydrolysis of complex carboxylic polyesters found in the cell wall of plants (By similarity). Degrades cutin, a macromolecule that forms the structure of the plant cuticle (By similarity).</text>
</comment>
<comment type="catalytic activity">
    <reaction evidence="5 6">
        <text>cutin + H2O = cutin monomers.</text>
        <dbReference type="EC" id="3.1.1.74"/>
    </reaction>
</comment>
<comment type="subcellular location">
    <subcellularLocation>
        <location evidence="2">Secreted</location>
    </subcellularLocation>
</comment>
<comment type="similarity">
    <text evidence="7">Belongs to the cutinase family.</text>
</comment>
<feature type="signal peptide" evidence="4">
    <location>
        <begin position="1"/>
        <end position="17"/>
    </location>
</feature>
<feature type="chain" id="PRO_0000395258" description="Probable cutinase 4">
    <location>
        <begin position="18"/>
        <end position="219"/>
    </location>
</feature>
<feature type="active site" description="Nucleophile" evidence="1">
    <location>
        <position position="131"/>
    </location>
</feature>
<feature type="active site" evidence="1">
    <location>
        <position position="186"/>
    </location>
</feature>
<feature type="active site" description="Proton donor/acceptor" evidence="1">
    <location>
        <position position="199"/>
    </location>
</feature>
<feature type="site" description="Transition state stabilizer" evidence="1">
    <location>
        <position position="52"/>
    </location>
</feature>
<feature type="site" description="Transition state stabilizer" evidence="1">
    <location>
        <position position="132"/>
    </location>
</feature>
<feature type="glycosylation site" description="N-linked (GlcNAc...) asparagine" evidence="4">
    <location>
        <position position="99"/>
    </location>
</feature>
<feature type="disulfide bond" evidence="3">
    <location>
        <begin position="41"/>
        <end position="120"/>
    </location>
</feature>
<feature type="disulfide bond" evidence="3">
    <location>
        <begin position="67"/>
        <end position="81"/>
    </location>
</feature>
<feature type="disulfide bond" evidence="3">
    <location>
        <begin position="182"/>
        <end position="189"/>
    </location>
</feature>
<name>CUTI4_ASPTN</name>
<proteinExistence type="inferred from homology"/>
<protein>
    <recommendedName>
        <fullName>Probable cutinase 4</fullName>
        <ecNumber evidence="5 6">3.1.1.74</ecNumber>
    </recommendedName>
    <alternativeName>
        <fullName>Cutin hydrolase 4</fullName>
    </alternativeName>
</protein>
<sequence length="219" mass="22551">MILPSLLVASLSALAAAGPVPPSALEARQSESASDLENGICKPVVLIFARGSTESGNMGYIAGMPTCNALKTKLGSDQVACQGVGGAYTAGLIPNFLPNNTDQASIDEATKMFDLAHTQCPDAQIVAGGYSQGTAVMDGSIQALPDDIKSTVKGVVLFGFTRNLQDNGQIPNYPKDQTKVICAPGDLVCDGTLIITPAHLTYALYAGEAAEFLASKVSA</sequence>
<dbReference type="EC" id="3.1.1.74" evidence="5 6"/>
<dbReference type="EMBL" id="CH476596">
    <property type="protein sequence ID" value="EAU37095.1"/>
    <property type="molecule type" value="Genomic_DNA"/>
</dbReference>
<dbReference type="RefSeq" id="XP_001211311.1">
    <property type="nucleotide sequence ID" value="XM_001211311.1"/>
</dbReference>
<dbReference type="SMR" id="Q0CW01"/>
<dbReference type="STRING" id="341663.Q0CW01"/>
<dbReference type="ESTHER" id="asptn-cuti4">
    <property type="family name" value="Cutinase"/>
</dbReference>
<dbReference type="EnsemblFungi" id="EAU37095">
    <property type="protein sequence ID" value="EAU37095"/>
    <property type="gene ID" value="ATEG_02133"/>
</dbReference>
<dbReference type="GeneID" id="4317099"/>
<dbReference type="VEuPathDB" id="FungiDB:ATEG_02133"/>
<dbReference type="eggNOG" id="ENOG502SI38">
    <property type="taxonomic scope" value="Eukaryota"/>
</dbReference>
<dbReference type="HOGENOM" id="CLU_040058_2_0_1"/>
<dbReference type="OMA" id="VTFIMAR"/>
<dbReference type="OrthoDB" id="3225429at2759"/>
<dbReference type="Proteomes" id="UP000007963">
    <property type="component" value="Unassembled WGS sequence"/>
</dbReference>
<dbReference type="GO" id="GO:0005576">
    <property type="term" value="C:extracellular region"/>
    <property type="evidence" value="ECO:0007669"/>
    <property type="project" value="UniProtKB-SubCell"/>
</dbReference>
<dbReference type="GO" id="GO:0050525">
    <property type="term" value="F:cutinase activity"/>
    <property type="evidence" value="ECO:0000250"/>
    <property type="project" value="UniProtKB"/>
</dbReference>
<dbReference type="GO" id="GO:0016052">
    <property type="term" value="P:carbohydrate catabolic process"/>
    <property type="evidence" value="ECO:0007669"/>
    <property type="project" value="TreeGrafter"/>
</dbReference>
<dbReference type="FunFam" id="3.40.50.1820:FF:000235">
    <property type="entry name" value="Cutinase 1"/>
    <property type="match status" value="1"/>
</dbReference>
<dbReference type="Gene3D" id="3.40.50.1820">
    <property type="entry name" value="alpha/beta hydrolase"/>
    <property type="match status" value="1"/>
</dbReference>
<dbReference type="InterPro" id="IPR029058">
    <property type="entry name" value="AB_hydrolase_fold"/>
</dbReference>
<dbReference type="InterPro" id="IPR000675">
    <property type="entry name" value="Cutinase/axe"/>
</dbReference>
<dbReference type="InterPro" id="IPR043580">
    <property type="entry name" value="CUTINASE_1"/>
</dbReference>
<dbReference type="InterPro" id="IPR043579">
    <property type="entry name" value="CUTINASE_2"/>
</dbReference>
<dbReference type="InterPro" id="IPR011150">
    <property type="entry name" value="Cutinase_monf"/>
</dbReference>
<dbReference type="PANTHER" id="PTHR48250:SF3">
    <property type="entry name" value="CUTINASE 1-RELATED"/>
    <property type="match status" value="1"/>
</dbReference>
<dbReference type="PANTHER" id="PTHR48250">
    <property type="entry name" value="CUTINASE 2-RELATED"/>
    <property type="match status" value="1"/>
</dbReference>
<dbReference type="Pfam" id="PF01083">
    <property type="entry name" value="Cutinase"/>
    <property type="match status" value="1"/>
</dbReference>
<dbReference type="PRINTS" id="PR00129">
    <property type="entry name" value="CUTINASE"/>
</dbReference>
<dbReference type="SMART" id="SM01110">
    <property type="entry name" value="Cutinase"/>
    <property type="match status" value="1"/>
</dbReference>
<dbReference type="SUPFAM" id="SSF53474">
    <property type="entry name" value="alpha/beta-Hydrolases"/>
    <property type="match status" value="1"/>
</dbReference>
<dbReference type="PROSITE" id="PS00155">
    <property type="entry name" value="CUTINASE_1"/>
    <property type="match status" value="1"/>
</dbReference>
<dbReference type="PROSITE" id="PS00931">
    <property type="entry name" value="CUTINASE_2"/>
    <property type="match status" value="1"/>
</dbReference>